<name>COABC_MYCTU</name>
<sequence>MVDHKRIPKQVIVGVSGGIAAYKACTVVRQLTEASHRVRVIPTESALRFVGAATFEALSGEPVCTDVFADVPAVPHVHLGQQADLVVVAPATADLLARAAAGRADDLLTATLLTARCPVLFAPAMHTEMWLHPATVDNVATLRRRGAVVLEPATGRLTGADSGAGRLPEAEEITTLAQLLLERHDALPYDLAGRKLLVTAGGTREPIDPVRFIGNRSSGKQGYAVARVAAQRGADVTLIAGHTAGLVDPAGVEVVHVSSAQQLADAVSKHAPTADVLVMAAAVADFRPAQVATAKIKKGVEGPPTIELLRNDDVLAGVVRARAHGQLPNMRAIVGFAAETGDANGDVLFHARAKLRRKGCDLLVVNAVGEGRAFEVDSNDGWLLASDGTESALQHGSKTLMASRIVDAIVTFLAGCSS</sequence>
<comment type="function">
    <text evidence="1 3">Catalyzes two sequential steps in the biosynthesis of coenzyme A. In the first step cysteine is conjugated to 4'-phosphopantothenate to form 4-phosphopantothenoylcysteine. In the second step the latter compound is decarboxylated to form 4'-phosphopantotheine (By similarity). Required for growth and persistence in mice (PubMed:27676316).</text>
</comment>
<comment type="catalytic activity">
    <reaction evidence="1">
        <text>N-[(R)-4-phosphopantothenoyl]-L-cysteine + H(+) = (R)-4'-phosphopantetheine + CO2</text>
        <dbReference type="Rhea" id="RHEA:16793"/>
        <dbReference type="ChEBI" id="CHEBI:15378"/>
        <dbReference type="ChEBI" id="CHEBI:16526"/>
        <dbReference type="ChEBI" id="CHEBI:59458"/>
        <dbReference type="ChEBI" id="CHEBI:61723"/>
        <dbReference type="EC" id="4.1.1.36"/>
    </reaction>
</comment>
<comment type="catalytic activity">
    <reaction evidence="1">
        <text>(R)-4'-phosphopantothenate + L-cysteine + CTP = N-[(R)-4-phosphopantothenoyl]-L-cysteine + CMP + diphosphate + H(+)</text>
        <dbReference type="Rhea" id="RHEA:19397"/>
        <dbReference type="ChEBI" id="CHEBI:10986"/>
        <dbReference type="ChEBI" id="CHEBI:15378"/>
        <dbReference type="ChEBI" id="CHEBI:33019"/>
        <dbReference type="ChEBI" id="CHEBI:35235"/>
        <dbReference type="ChEBI" id="CHEBI:37563"/>
        <dbReference type="ChEBI" id="CHEBI:59458"/>
        <dbReference type="ChEBI" id="CHEBI:60377"/>
        <dbReference type="EC" id="6.3.2.5"/>
    </reaction>
</comment>
<comment type="cofactor">
    <cofactor evidence="1">
        <name>Mg(2+)</name>
        <dbReference type="ChEBI" id="CHEBI:18420"/>
    </cofactor>
</comment>
<comment type="cofactor">
    <cofactor evidence="1">
        <name>FMN</name>
        <dbReference type="ChEBI" id="CHEBI:58210"/>
    </cofactor>
    <text evidence="1">Binds 1 FMN per subunit.</text>
</comment>
<comment type="activity regulation">
    <text evidence="4">Inhibited by coenzyme A (CoA) and CoA thioesthers (PubMed:33420031). Two related chemical scaffolds that potently inhibit the activity of the CoaB moiety of CoaBC through a cryptic allosteric site that sits in the dimer interface region of the CoaB enzyme were identified (PubMed:33420031).</text>
</comment>
<comment type="pathway">
    <text evidence="1">Cofactor biosynthesis; coenzyme A biosynthesis; CoA from (R)-pantothenate: step 2/5.</text>
</comment>
<comment type="pathway">
    <text evidence="1">Cofactor biosynthesis; coenzyme A biosynthesis; CoA from (R)-pantothenate: step 3/5.</text>
</comment>
<comment type="subunit">
    <text evidence="4">Homododecamer.</text>
</comment>
<comment type="disruption phenotype">
    <text evidence="3">Transcriptional silencing of this gene leads to growth attenuation and results in a bactericidal phenotype in vitro and in vivo, whether initiated at infection or during either the acute or chronic stages of infection.</text>
</comment>
<comment type="miscellaneous">
    <text evidence="2 3 4">Was identified as a high-confidence drug target.</text>
</comment>
<comment type="similarity">
    <text evidence="1">In the N-terminal section; belongs to the HFCD (homo-oligomeric flavin containing Cys decarboxylase) superfamily.</text>
</comment>
<comment type="similarity">
    <text evidence="1">In the C-terminal section; belongs to the PPC synthetase family.</text>
</comment>
<accession>P9WNZ1</accession>
<accession>L0T847</accession>
<accession>P67733</accession>
<accession>P71661</accession>
<dbReference type="EC" id="4.1.1.36" evidence="1"/>
<dbReference type="EC" id="6.3.2.5" evidence="1"/>
<dbReference type="EMBL" id="AL123456">
    <property type="protein sequence ID" value="CCP44150.1"/>
    <property type="molecule type" value="Genomic_DNA"/>
</dbReference>
<dbReference type="PIR" id="E70899">
    <property type="entry name" value="E70899"/>
</dbReference>
<dbReference type="RefSeq" id="NP_215907.1">
    <property type="nucleotide sequence ID" value="NC_000962.3"/>
</dbReference>
<dbReference type="RefSeq" id="WP_003898859.1">
    <property type="nucleotide sequence ID" value="NZ_NVQJ01000050.1"/>
</dbReference>
<dbReference type="SMR" id="P9WNZ1"/>
<dbReference type="FunCoup" id="P9WNZ1">
    <property type="interactions" value="206"/>
</dbReference>
<dbReference type="STRING" id="83332.Rv1391"/>
<dbReference type="ChEMBL" id="CHEMBL4662928"/>
<dbReference type="PaxDb" id="83332-Rv1391"/>
<dbReference type="DNASU" id="886749"/>
<dbReference type="GeneID" id="886749"/>
<dbReference type="KEGG" id="mtu:Rv1391"/>
<dbReference type="KEGG" id="mtv:RVBD_1391"/>
<dbReference type="PATRIC" id="fig|83332.111.peg.1550"/>
<dbReference type="TubercuList" id="Rv1391"/>
<dbReference type="eggNOG" id="COG0452">
    <property type="taxonomic scope" value="Bacteria"/>
</dbReference>
<dbReference type="InParanoid" id="P9WNZ1"/>
<dbReference type="OrthoDB" id="9802554at2"/>
<dbReference type="PhylomeDB" id="P9WNZ1"/>
<dbReference type="UniPathway" id="UPA00241">
    <property type="reaction ID" value="UER00353"/>
</dbReference>
<dbReference type="UniPathway" id="UPA00241">
    <property type="reaction ID" value="UER00354"/>
</dbReference>
<dbReference type="Proteomes" id="UP000001584">
    <property type="component" value="Chromosome"/>
</dbReference>
<dbReference type="GO" id="GO:0071513">
    <property type="term" value="C:phosphopantothenoylcysteine decarboxylase complex"/>
    <property type="evidence" value="ECO:0000318"/>
    <property type="project" value="GO_Central"/>
</dbReference>
<dbReference type="GO" id="GO:0005886">
    <property type="term" value="C:plasma membrane"/>
    <property type="evidence" value="ECO:0007005"/>
    <property type="project" value="MTBBASE"/>
</dbReference>
<dbReference type="GO" id="GO:0010181">
    <property type="term" value="F:FMN binding"/>
    <property type="evidence" value="ECO:0000318"/>
    <property type="project" value="GO_Central"/>
</dbReference>
<dbReference type="GO" id="GO:0046872">
    <property type="term" value="F:metal ion binding"/>
    <property type="evidence" value="ECO:0007669"/>
    <property type="project" value="UniProtKB-KW"/>
</dbReference>
<dbReference type="GO" id="GO:0004632">
    <property type="term" value="F:phosphopantothenate--cysteine ligase activity"/>
    <property type="evidence" value="ECO:0007669"/>
    <property type="project" value="UniProtKB-UniRule"/>
</dbReference>
<dbReference type="GO" id="GO:0004633">
    <property type="term" value="F:phosphopantothenoylcysteine decarboxylase activity"/>
    <property type="evidence" value="ECO:0000314"/>
    <property type="project" value="MTBBASE"/>
</dbReference>
<dbReference type="GO" id="GO:0015937">
    <property type="term" value="P:coenzyme A biosynthetic process"/>
    <property type="evidence" value="ECO:0000314"/>
    <property type="project" value="MTBBASE"/>
</dbReference>
<dbReference type="GO" id="GO:0015941">
    <property type="term" value="P:pantothenate catabolic process"/>
    <property type="evidence" value="ECO:0007669"/>
    <property type="project" value="InterPro"/>
</dbReference>
<dbReference type="FunFam" id="3.40.50.10300:FF:000001">
    <property type="entry name" value="Coenzyme A biosynthesis bifunctional protein CoaBC"/>
    <property type="match status" value="1"/>
</dbReference>
<dbReference type="FunFam" id="3.40.50.1950:FF:000009">
    <property type="entry name" value="Coenzyme A biosynthesis bifunctional protein CoaBC"/>
    <property type="match status" value="1"/>
</dbReference>
<dbReference type="Gene3D" id="3.40.50.10300">
    <property type="entry name" value="CoaB-like"/>
    <property type="match status" value="1"/>
</dbReference>
<dbReference type="Gene3D" id="3.40.50.1950">
    <property type="entry name" value="Flavin prenyltransferase-like"/>
    <property type="match status" value="1"/>
</dbReference>
<dbReference type="HAMAP" id="MF_02225">
    <property type="entry name" value="CoaBC"/>
    <property type="match status" value="1"/>
</dbReference>
<dbReference type="InterPro" id="IPR035929">
    <property type="entry name" value="CoaB-like_sf"/>
</dbReference>
<dbReference type="InterPro" id="IPR005252">
    <property type="entry name" value="CoaBC"/>
</dbReference>
<dbReference type="InterPro" id="IPR007085">
    <property type="entry name" value="DNA/pantothenate-metab_flavo_C"/>
</dbReference>
<dbReference type="InterPro" id="IPR036551">
    <property type="entry name" value="Flavin_trans-like"/>
</dbReference>
<dbReference type="InterPro" id="IPR003382">
    <property type="entry name" value="Flavoprotein"/>
</dbReference>
<dbReference type="NCBIfam" id="TIGR00521">
    <property type="entry name" value="coaBC_dfp"/>
    <property type="match status" value="1"/>
</dbReference>
<dbReference type="PANTHER" id="PTHR14359">
    <property type="entry name" value="HOMO-OLIGOMERIC FLAVIN CONTAINING CYS DECARBOXYLASE FAMILY"/>
    <property type="match status" value="1"/>
</dbReference>
<dbReference type="PANTHER" id="PTHR14359:SF6">
    <property type="entry name" value="PHOSPHOPANTOTHENOYLCYSTEINE DECARBOXYLASE"/>
    <property type="match status" value="1"/>
</dbReference>
<dbReference type="Pfam" id="PF04127">
    <property type="entry name" value="DFP"/>
    <property type="match status" value="1"/>
</dbReference>
<dbReference type="Pfam" id="PF02441">
    <property type="entry name" value="Flavoprotein"/>
    <property type="match status" value="1"/>
</dbReference>
<dbReference type="SUPFAM" id="SSF102645">
    <property type="entry name" value="CoaB-like"/>
    <property type="match status" value="1"/>
</dbReference>
<dbReference type="SUPFAM" id="SSF52507">
    <property type="entry name" value="Homo-oligomeric flavin-containing Cys decarboxylases, HFCD"/>
    <property type="match status" value="1"/>
</dbReference>
<reference key="1">
    <citation type="journal article" date="1998" name="Nature">
        <title>Deciphering the biology of Mycobacterium tuberculosis from the complete genome sequence.</title>
        <authorList>
            <person name="Cole S.T."/>
            <person name="Brosch R."/>
            <person name="Parkhill J."/>
            <person name="Garnier T."/>
            <person name="Churcher C.M."/>
            <person name="Harris D.E."/>
            <person name="Gordon S.V."/>
            <person name="Eiglmeier K."/>
            <person name="Gas S."/>
            <person name="Barry C.E. III"/>
            <person name="Tekaia F."/>
            <person name="Badcock K."/>
            <person name="Basham D."/>
            <person name="Brown D."/>
            <person name="Chillingworth T."/>
            <person name="Connor R."/>
            <person name="Davies R.M."/>
            <person name="Devlin K."/>
            <person name="Feltwell T."/>
            <person name="Gentles S."/>
            <person name="Hamlin N."/>
            <person name="Holroyd S."/>
            <person name="Hornsby T."/>
            <person name="Jagels K."/>
            <person name="Krogh A."/>
            <person name="McLean J."/>
            <person name="Moule S."/>
            <person name="Murphy L.D."/>
            <person name="Oliver S."/>
            <person name="Osborne J."/>
            <person name="Quail M.A."/>
            <person name="Rajandream M.A."/>
            <person name="Rogers J."/>
            <person name="Rutter S."/>
            <person name="Seeger K."/>
            <person name="Skelton S."/>
            <person name="Squares S."/>
            <person name="Squares R."/>
            <person name="Sulston J.E."/>
            <person name="Taylor K."/>
            <person name="Whitehead S."/>
            <person name="Barrell B.G."/>
        </authorList>
    </citation>
    <scope>NUCLEOTIDE SEQUENCE [LARGE SCALE GENOMIC DNA]</scope>
    <source>
        <strain>ATCC 25618 / H37Rv</strain>
    </source>
</reference>
<reference key="2">
    <citation type="journal article" date="2008" name="BMC Syst. Biol.">
        <title>targetTB: a target identification pipeline for Mycobacterium tuberculosis through an interactome, reactome and genome-scale structural analysis.</title>
        <authorList>
            <person name="Raman K."/>
            <person name="Yeturu K."/>
            <person name="Chandra N."/>
        </authorList>
    </citation>
    <scope>IDENTIFICATION AS A DRUG TARGET [LARGE SCALE ANALYSIS]</scope>
</reference>
<reference key="3">
    <citation type="journal article" date="2011" name="Mol. Cell. Proteomics">
        <title>Proteogenomic analysis of Mycobacterium tuberculosis by high resolution mass spectrometry.</title>
        <authorList>
            <person name="Kelkar D.S."/>
            <person name="Kumar D."/>
            <person name="Kumar P."/>
            <person name="Balakrishnan L."/>
            <person name="Muthusamy B."/>
            <person name="Yadav A.K."/>
            <person name="Shrivastava P."/>
            <person name="Marimuthu A."/>
            <person name="Anand S."/>
            <person name="Sundaram H."/>
            <person name="Kingsbury R."/>
            <person name="Harsha H.C."/>
            <person name="Nair B."/>
            <person name="Prasad T.S."/>
            <person name="Chauhan D.S."/>
            <person name="Katoch K."/>
            <person name="Katoch V.M."/>
            <person name="Kumar P."/>
            <person name="Chaerkady R."/>
            <person name="Ramachandran S."/>
            <person name="Dash D."/>
            <person name="Pandey A."/>
        </authorList>
    </citation>
    <scope>IDENTIFICATION BY MASS SPECTROMETRY [LARGE SCALE ANALYSIS]</scope>
    <source>
        <strain>ATCC 25618 / H37Rv</strain>
    </source>
</reference>
<reference key="4">
    <citation type="journal article" date="2016" name="ACS Infect. Dis.">
        <title>Validation of CoaBC as a bactericidal target in the coenzyme A pathway of Mycobacterium tuberculosis.</title>
        <authorList>
            <person name="Evans J.C."/>
            <person name="Trujillo C."/>
            <person name="Wang Z."/>
            <person name="Eoh H."/>
            <person name="Ehrt S."/>
            <person name="Schnappinger D."/>
            <person name="Boshoff H.I."/>
            <person name="Rhee K.Y."/>
            <person name="Barry C.E. III"/>
            <person name="Mizrahi V."/>
        </authorList>
    </citation>
    <scope>FUNCTION</scope>
    <scope>DISRUPTION PHENOTYPE</scope>
    <scope>IDENTIFICATION AS A DRUG TARGET</scope>
</reference>
<reference key="5">
    <citation type="journal article" date="2021" name="Nat. Commun.">
        <title>Inhibiting Mycobacterium tuberculosis CoaBC by targeting an allosteric site.</title>
        <authorList>
            <person name="Mendes V."/>
            <person name="Green S.R."/>
            <person name="Evans J.C."/>
            <person name="Hess J."/>
            <person name="Blaszczyk M."/>
            <person name="Spry C."/>
            <person name="Bryant O."/>
            <person name="Cory-Wright J."/>
            <person name="Chan D.S."/>
            <person name="Torres P.H.M."/>
            <person name="Wang Z."/>
            <person name="Nahiyaan N."/>
            <person name="O'Neill S."/>
            <person name="Damerow S."/>
            <person name="Post J."/>
            <person name="Bayliss T."/>
            <person name="Lynch S.L."/>
            <person name="Coyne A.G."/>
            <person name="Ray P.C."/>
            <person name="Abell C."/>
            <person name="Rhee K.Y."/>
            <person name="Boshoff H.I.M."/>
            <person name="Barry C.E. III"/>
            <person name="Mizrahi V."/>
            <person name="Wyatt P.G."/>
            <person name="Blundell T.L."/>
        </authorList>
    </citation>
    <scope>ACTIVITY REGULATION</scope>
    <scope>SUBUNIT</scope>
    <scope>IDENTIFICATION AS A DRUG TARGET</scope>
    <source>
        <strain>ATCC 25618 / H37Rv</strain>
    </source>
</reference>
<organism>
    <name type="scientific">Mycobacterium tuberculosis (strain ATCC 25618 / H37Rv)</name>
    <dbReference type="NCBI Taxonomy" id="83332"/>
    <lineage>
        <taxon>Bacteria</taxon>
        <taxon>Bacillati</taxon>
        <taxon>Actinomycetota</taxon>
        <taxon>Actinomycetes</taxon>
        <taxon>Mycobacteriales</taxon>
        <taxon>Mycobacteriaceae</taxon>
        <taxon>Mycobacterium</taxon>
        <taxon>Mycobacterium tuberculosis complex</taxon>
    </lineage>
</organism>
<evidence type="ECO:0000255" key="1">
    <source>
        <dbReference type="HAMAP-Rule" id="MF_02225"/>
    </source>
</evidence>
<evidence type="ECO:0000269" key="2">
    <source>
    </source>
</evidence>
<evidence type="ECO:0000269" key="3">
    <source>
    </source>
</evidence>
<evidence type="ECO:0000269" key="4">
    <source>
    </source>
</evidence>
<evidence type="ECO:0000303" key="5">
    <source>
    </source>
</evidence>
<protein>
    <recommendedName>
        <fullName evidence="1">Coenzyme A biosynthesis bifunctional protein CoaBC</fullName>
    </recommendedName>
    <alternativeName>
        <fullName evidence="1">DNA/pantothenate metabolism flavoprotein</fullName>
    </alternativeName>
    <alternativeName>
        <fullName evidence="1">Phosphopantothenoylcysteine synthetase/decarboxylase</fullName>
        <shortName evidence="1">PPCS-PPCDC</shortName>
    </alternativeName>
    <domain>
        <recommendedName>
            <fullName evidence="1">Phosphopantothenoylcysteine decarboxylase</fullName>
            <shortName evidence="1">PPC decarboxylase</shortName>
            <shortName evidence="1">PPC-DC</shortName>
            <ecNumber evidence="1">4.1.1.36</ecNumber>
        </recommendedName>
        <alternativeName>
            <fullName evidence="1">CoaC</fullName>
        </alternativeName>
    </domain>
    <domain>
        <recommendedName>
            <fullName evidence="1">Phosphopantothenate--cysteine ligase</fullName>
            <ecNumber evidence="1">6.3.2.5</ecNumber>
        </recommendedName>
        <alternativeName>
            <fullName evidence="1">CoaB</fullName>
        </alternativeName>
        <alternativeName>
            <fullName evidence="1">Phosphopantothenoylcysteine synthetase</fullName>
            <shortName evidence="1">PPC synthetase</shortName>
            <shortName evidence="1">PPC-S</shortName>
        </alternativeName>
    </domain>
</protein>
<keyword id="KW-0210">Decarboxylase</keyword>
<keyword id="KW-0285">Flavoprotein</keyword>
<keyword id="KW-0288">FMN</keyword>
<keyword id="KW-0436">Ligase</keyword>
<keyword id="KW-0456">Lyase</keyword>
<keyword id="KW-0460">Magnesium</keyword>
<keyword id="KW-0479">Metal-binding</keyword>
<keyword id="KW-0511">Multifunctional enzyme</keyword>
<keyword id="KW-1185">Reference proteome</keyword>
<proteinExistence type="evidence at protein level"/>
<feature type="chain" id="PRO_0000232694" description="Coenzyme A biosynthesis bifunctional protein CoaBC">
    <location>
        <begin position="1"/>
        <end position="418"/>
    </location>
</feature>
<feature type="region of interest" description="Phosphopantothenoylcysteine decarboxylase" evidence="1">
    <location>
        <begin position="1"/>
        <end position="195"/>
    </location>
</feature>
<feature type="region of interest" description="Phosphopantothenate--cysteine ligase" evidence="1">
    <location>
        <begin position="196"/>
        <end position="418"/>
    </location>
</feature>
<feature type="binding site" evidence="1">
    <location>
        <position position="285"/>
    </location>
    <ligand>
        <name>CTP</name>
        <dbReference type="ChEBI" id="CHEBI:37563"/>
    </ligand>
</feature>
<feature type="binding site" evidence="1">
    <location>
        <position position="295"/>
    </location>
    <ligand>
        <name>CTP</name>
        <dbReference type="ChEBI" id="CHEBI:37563"/>
    </ligand>
</feature>
<feature type="binding site" evidence="1">
    <location>
        <position position="336"/>
    </location>
    <ligand>
        <name>CTP</name>
        <dbReference type="ChEBI" id="CHEBI:37563"/>
    </ligand>
</feature>
<feature type="binding site" evidence="1">
    <location>
        <position position="354"/>
    </location>
    <ligand>
        <name>CTP</name>
        <dbReference type="ChEBI" id="CHEBI:37563"/>
    </ligand>
</feature>
<feature type="binding site" evidence="1">
    <location>
        <position position="358"/>
    </location>
    <ligand>
        <name>CTP</name>
        <dbReference type="ChEBI" id="CHEBI:37563"/>
    </ligand>
</feature>
<gene>
    <name evidence="1 5" type="primary">coaBC</name>
    <name type="synonym">dfp</name>
    <name type="ordered locus">Rv1391</name>
    <name type="ORF">MTCY21B4.08</name>
</gene>